<sequence>MGDKEGACFMKIAKYLDKALEYLSILALVIMISLVFFNSVLRYFFDSGIAFSEEFSRICFVYMISFGIILVAKDKAHLTVDIIIPALPEQYRKIVLIVANICVLIAMIFIAYGALQLMSLTYTQQMPATGISSSFLYLAAVISAVSYFFIVMFSMIKDYKESSDK</sequence>
<evidence type="ECO:0000255" key="1"/>
<evidence type="ECO:0000305" key="2"/>
<keyword id="KW-0997">Cell inner membrane</keyword>
<keyword id="KW-1003">Cell membrane</keyword>
<keyword id="KW-0472">Membrane</keyword>
<keyword id="KW-1185">Reference proteome</keyword>
<keyword id="KW-0812">Transmembrane</keyword>
<keyword id="KW-1133">Transmembrane helix</keyword>
<keyword id="KW-0813">Transport</keyword>
<proteinExistence type="inferred from homology"/>
<organism>
    <name type="scientific">Haemophilus influenzae (strain ATCC 51907 / DSM 11121 / KW20 / Rd)</name>
    <dbReference type="NCBI Taxonomy" id="71421"/>
    <lineage>
        <taxon>Bacteria</taxon>
        <taxon>Pseudomonadati</taxon>
        <taxon>Pseudomonadota</taxon>
        <taxon>Gammaproteobacteria</taxon>
        <taxon>Pasteurellales</taxon>
        <taxon>Pasteurellaceae</taxon>
        <taxon>Haemophilus</taxon>
    </lineage>
</organism>
<reference key="1">
    <citation type="journal article" date="1995" name="Science">
        <title>Whole-genome random sequencing and assembly of Haemophilus influenzae Rd.</title>
        <authorList>
            <person name="Fleischmann R.D."/>
            <person name="Adams M.D."/>
            <person name="White O."/>
            <person name="Clayton R.A."/>
            <person name="Kirkness E.F."/>
            <person name="Kerlavage A.R."/>
            <person name="Bult C.J."/>
            <person name="Tomb J.-F."/>
            <person name="Dougherty B.A."/>
            <person name="Merrick J.M."/>
            <person name="McKenney K."/>
            <person name="Sutton G.G."/>
            <person name="FitzHugh W."/>
            <person name="Fields C.A."/>
            <person name="Gocayne J.D."/>
            <person name="Scott J.D."/>
            <person name="Shirley R."/>
            <person name="Liu L.-I."/>
            <person name="Glodek A."/>
            <person name="Kelley J.M."/>
            <person name="Weidman J.F."/>
            <person name="Phillips C.A."/>
            <person name="Spriggs T."/>
            <person name="Hedblom E."/>
            <person name="Cotton M.D."/>
            <person name="Utterback T.R."/>
            <person name="Hanna M.C."/>
            <person name="Nguyen D.T."/>
            <person name="Saudek D.M."/>
            <person name="Brandon R.C."/>
            <person name="Fine L.D."/>
            <person name="Fritchman J.L."/>
            <person name="Fuhrmann J.L."/>
            <person name="Geoghagen N.S.M."/>
            <person name="Gnehm C.L."/>
            <person name="McDonald L.A."/>
            <person name="Small K.V."/>
            <person name="Fraser C.M."/>
            <person name="Smith H.O."/>
            <person name="Venter J.C."/>
        </authorList>
    </citation>
    <scope>NUCLEOTIDE SEQUENCE [LARGE SCALE GENOMIC DNA]</scope>
    <source>
        <strain>ATCC 51907 / DSM 11121 / KW20 / Rd</strain>
    </source>
</reference>
<dbReference type="EMBL" id="L42023">
    <property type="protein sequence ID" value="AAC21729.1"/>
    <property type="molecule type" value="Genomic_DNA"/>
</dbReference>
<dbReference type="PIR" id="D64141">
    <property type="entry name" value="D64141"/>
</dbReference>
<dbReference type="RefSeq" id="NP_438224.1">
    <property type="nucleotide sequence ID" value="NC_000907.1"/>
</dbReference>
<dbReference type="SMR" id="P44484"/>
<dbReference type="STRING" id="71421.HI_0051"/>
<dbReference type="EnsemblBacteria" id="AAC21729">
    <property type="protein sequence ID" value="AAC21729"/>
    <property type="gene ID" value="HI_0051"/>
</dbReference>
<dbReference type="KEGG" id="hin:HI_0051"/>
<dbReference type="PATRIC" id="fig|71421.8.peg.51"/>
<dbReference type="eggNOG" id="COG3090">
    <property type="taxonomic scope" value="Bacteria"/>
</dbReference>
<dbReference type="HOGENOM" id="CLU_086356_9_0_6"/>
<dbReference type="OrthoDB" id="9791324at2"/>
<dbReference type="PhylomeDB" id="P44484"/>
<dbReference type="BioCyc" id="HINF71421:G1GJ1-52-MONOMER"/>
<dbReference type="Proteomes" id="UP000000579">
    <property type="component" value="Chromosome"/>
</dbReference>
<dbReference type="GO" id="GO:0005886">
    <property type="term" value="C:plasma membrane"/>
    <property type="evidence" value="ECO:0000318"/>
    <property type="project" value="GO_Central"/>
</dbReference>
<dbReference type="GO" id="GO:0022857">
    <property type="term" value="F:transmembrane transporter activity"/>
    <property type="evidence" value="ECO:0000318"/>
    <property type="project" value="GO_Central"/>
</dbReference>
<dbReference type="GO" id="GO:0015740">
    <property type="term" value="P:C4-dicarboxylate transport"/>
    <property type="evidence" value="ECO:0000318"/>
    <property type="project" value="GO_Central"/>
</dbReference>
<dbReference type="InterPro" id="IPR055348">
    <property type="entry name" value="DctQ"/>
</dbReference>
<dbReference type="InterPro" id="IPR007387">
    <property type="entry name" value="TRAP_DctQ"/>
</dbReference>
<dbReference type="PANTHER" id="PTHR35011">
    <property type="entry name" value="2,3-DIKETO-L-GULONATE TRAP TRANSPORTER SMALL PERMEASE PROTEIN YIAM"/>
    <property type="match status" value="1"/>
</dbReference>
<dbReference type="PANTHER" id="PTHR35011:SF2">
    <property type="entry name" value="2,3-DIKETO-L-GULONATE TRAP TRANSPORTER SMALL PERMEASE PROTEIN YIAM"/>
    <property type="match status" value="1"/>
</dbReference>
<dbReference type="Pfam" id="PF04290">
    <property type="entry name" value="DctQ"/>
    <property type="match status" value="1"/>
</dbReference>
<name>Y051_HAEIN</name>
<gene>
    <name type="ordered locus">HI_0051</name>
</gene>
<comment type="subcellular location">
    <subcellularLocation>
        <location evidence="2">Cell inner membrane</location>
        <topology evidence="2">Multi-pass membrane protein</topology>
    </subcellularLocation>
</comment>
<comment type="similarity">
    <text evidence="2">Belongs to the TRAP transporter small permease family.</text>
</comment>
<protein>
    <recommendedName>
        <fullName>Putative TRAP transporter small permease protein HI_0051</fullName>
    </recommendedName>
</protein>
<accession>P44484</accession>
<feature type="chain" id="PRO_0000169597" description="Putative TRAP transporter small permease protein HI_0051">
    <location>
        <begin position="1"/>
        <end position="165"/>
    </location>
</feature>
<feature type="transmembrane region" description="Helical" evidence="1">
    <location>
        <begin position="20"/>
        <end position="40"/>
    </location>
</feature>
<feature type="transmembrane region" description="Helical" evidence="1">
    <location>
        <begin position="51"/>
        <end position="71"/>
    </location>
</feature>
<feature type="transmembrane region" description="Helical" evidence="1">
    <location>
        <begin position="94"/>
        <end position="114"/>
    </location>
</feature>
<feature type="transmembrane region" description="Helical" evidence="1">
    <location>
        <begin position="136"/>
        <end position="156"/>
    </location>
</feature>